<evidence type="ECO:0000255" key="1">
    <source>
        <dbReference type="HAMAP-Rule" id="MF_01077"/>
    </source>
</evidence>
<name>RIMP_STRPB</name>
<keyword id="KW-0963">Cytoplasm</keyword>
<keyword id="KW-0690">Ribosome biogenesis</keyword>
<accession>Q1JAB7</accession>
<proteinExistence type="inferred from homology"/>
<protein>
    <recommendedName>
        <fullName evidence="1">Ribosome maturation factor RimP</fullName>
    </recommendedName>
</protein>
<sequence length="178" mass="19689">MDSQGPIILEKSIKIEEVIKIANTSIIDIVTKTVTPEIKAPYELVDVEYDKMGSDYILSILVDKEGGITVEDTSDLTNIISPLLDTIDPDPFPNQYMLEVSSPGLERPLKTADSLKAAVGSYINVSLYQAIDKVKVFQGDLLAFDGETLTIDYLDKTRHKIVNIPYQAVAKVRMAVKL</sequence>
<gene>
    <name evidence="1" type="primary">rimP</name>
    <name type="ordered locus">MGAS2096_Spy1439</name>
</gene>
<feature type="chain" id="PRO_1000064781" description="Ribosome maturation factor RimP">
    <location>
        <begin position="1"/>
        <end position="178"/>
    </location>
</feature>
<comment type="function">
    <text evidence="1">Required for maturation of 30S ribosomal subunits.</text>
</comment>
<comment type="subcellular location">
    <subcellularLocation>
        <location evidence="1">Cytoplasm</location>
    </subcellularLocation>
</comment>
<comment type="similarity">
    <text evidence="1">Belongs to the RimP family.</text>
</comment>
<dbReference type="EMBL" id="CP000261">
    <property type="protein sequence ID" value="ABF36491.1"/>
    <property type="molecule type" value="Genomic_DNA"/>
</dbReference>
<dbReference type="SMR" id="Q1JAB7"/>
<dbReference type="KEGG" id="spj:MGAS2096_Spy1439"/>
<dbReference type="HOGENOM" id="CLU_070525_2_0_9"/>
<dbReference type="GO" id="GO:0005829">
    <property type="term" value="C:cytosol"/>
    <property type="evidence" value="ECO:0007669"/>
    <property type="project" value="TreeGrafter"/>
</dbReference>
<dbReference type="GO" id="GO:0000028">
    <property type="term" value="P:ribosomal small subunit assembly"/>
    <property type="evidence" value="ECO:0007669"/>
    <property type="project" value="TreeGrafter"/>
</dbReference>
<dbReference type="GO" id="GO:0006412">
    <property type="term" value="P:translation"/>
    <property type="evidence" value="ECO:0007669"/>
    <property type="project" value="TreeGrafter"/>
</dbReference>
<dbReference type="CDD" id="cd01734">
    <property type="entry name" value="YlxS_C"/>
    <property type="match status" value="1"/>
</dbReference>
<dbReference type="Gene3D" id="2.30.30.180">
    <property type="entry name" value="Ribosome maturation factor RimP, C-terminal domain"/>
    <property type="match status" value="1"/>
</dbReference>
<dbReference type="Gene3D" id="3.30.300.70">
    <property type="entry name" value="RimP-like superfamily, N-terminal"/>
    <property type="match status" value="1"/>
</dbReference>
<dbReference type="HAMAP" id="MF_01077">
    <property type="entry name" value="RimP"/>
    <property type="match status" value="1"/>
</dbReference>
<dbReference type="InterPro" id="IPR003728">
    <property type="entry name" value="Ribosome_maturation_RimP"/>
</dbReference>
<dbReference type="InterPro" id="IPR028998">
    <property type="entry name" value="RimP_C"/>
</dbReference>
<dbReference type="InterPro" id="IPR036847">
    <property type="entry name" value="RimP_C_sf"/>
</dbReference>
<dbReference type="InterPro" id="IPR028989">
    <property type="entry name" value="RimP_N"/>
</dbReference>
<dbReference type="InterPro" id="IPR035956">
    <property type="entry name" value="RimP_N_sf"/>
</dbReference>
<dbReference type="NCBIfam" id="NF000928">
    <property type="entry name" value="PRK00092.1-2"/>
    <property type="match status" value="1"/>
</dbReference>
<dbReference type="PANTHER" id="PTHR33867">
    <property type="entry name" value="RIBOSOME MATURATION FACTOR RIMP"/>
    <property type="match status" value="1"/>
</dbReference>
<dbReference type="PANTHER" id="PTHR33867:SF1">
    <property type="entry name" value="RIBOSOME MATURATION FACTOR RIMP"/>
    <property type="match status" value="1"/>
</dbReference>
<dbReference type="Pfam" id="PF17384">
    <property type="entry name" value="DUF150_C"/>
    <property type="match status" value="1"/>
</dbReference>
<dbReference type="Pfam" id="PF02576">
    <property type="entry name" value="RimP_N"/>
    <property type="match status" value="1"/>
</dbReference>
<dbReference type="SUPFAM" id="SSF74942">
    <property type="entry name" value="YhbC-like, C-terminal domain"/>
    <property type="match status" value="1"/>
</dbReference>
<dbReference type="SUPFAM" id="SSF75420">
    <property type="entry name" value="YhbC-like, N-terminal domain"/>
    <property type="match status" value="1"/>
</dbReference>
<organism>
    <name type="scientific">Streptococcus pyogenes serotype M12 (strain MGAS2096)</name>
    <dbReference type="NCBI Taxonomy" id="370553"/>
    <lineage>
        <taxon>Bacteria</taxon>
        <taxon>Bacillati</taxon>
        <taxon>Bacillota</taxon>
        <taxon>Bacilli</taxon>
        <taxon>Lactobacillales</taxon>
        <taxon>Streptococcaceae</taxon>
        <taxon>Streptococcus</taxon>
    </lineage>
</organism>
<reference key="1">
    <citation type="journal article" date="2006" name="Proc. Natl. Acad. Sci. U.S.A.">
        <title>Molecular genetic anatomy of inter- and intraserotype variation in the human bacterial pathogen group A Streptococcus.</title>
        <authorList>
            <person name="Beres S.B."/>
            <person name="Richter E.W."/>
            <person name="Nagiec M.J."/>
            <person name="Sumby P."/>
            <person name="Porcella S.F."/>
            <person name="DeLeo F.R."/>
            <person name="Musser J.M."/>
        </authorList>
    </citation>
    <scope>NUCLEOTIDE SEQUENCE [LARGE SCALE GENOMIC DNA]</scope>
    <source>
        <strain>MGAS2096</strain>
    </source>
</reference>